<name>ACKA_CLOAB</name>
<feature type="chain" id="PRO_0000107545" description="Acetate kinase">
    <location>
        <begin position="1"/>
        <end position="401"/>
    </location>
</feature>
<feature type="active site" description="Proton donor/acceptor" evidence="1">
    <location>
        <position position="147"/>
    </location>
</feature>
<feature type="binding site" evidence="1">
    <location>
        <position position="7"/>
    </location>
    <ligand>
        <name>Mg(2+)</name>
        <dbReference type="ChEBI" id="CHEBI:18420"/>
    </ligand>
</feature>
<feature type="binding site" evidence="1">
    <location>
        <position position="14"/>
    </location>
    <ligand>
        <name>ATP</name>
        <dbReference type="ChEBI" id="CHEBI:30616"/>
    </ligand>
</feature>
<feature type="binding site" evidence="1">
    <location>
        <position position="90"/>
    </location>
    <ligand>
        <name>substrate</name>
    </ligand>
</feature>
<feature type="binding site" evidence="1">
    <location>
        <begin position="207"/>
        <end position="211"/>
    </location>
    <ligand>
        <name>ATP</name>
        <dbReference type="ChEBI" id="CHEBI:30616"/>
    </ligand>
</feature>
<feature type="binding site" evidence="1">
    <location>
        <begin position="282"/>
        <end position="284"/>
    </location>
    <ligand>
        <name>ATP</name>
        <dbReference type="ChEBI" id="CHEBI:30616"/>
    </ligand>
</feature>
<feature type="binding site" evidence="1">
    <location>
        <begin position="331"/>
        <end position="335"/>
    </location>
    <ligand>
        <name>ATP</name>
        <dbReference type="ChEBI" id="CHEBI:30616"/>
    </ligand>
</feature>
<feature type="binding site" evidence="1">
    <location>
        <position position="385"/>
    </location>
    <ligand>
        <name>Mg(2+)</name>
        <dbReference type="ChEBI" id="CHEBI:18420"/>
    </ligand>
</feature>
<feature type="site" description="Transition state stabilizer" evidence="1">
    <location>
        <position position="179"/>
    </location>
</feature>
<feature type="site" description="Transition state stabilizer" evidence="1">
    <location>
        <position position="240"/>
    </location>
</feature>
<feature type="sequence conflict" description="In Ref. 1; AAB18301." evidence="2" ref="1">
    <original>K</original>
    <variation>R</variation>
    <location>
        <position position="61"/>
    </location>
</feature>
<feature type="sequence conflict" description="In Ref. 1; AAB18301." evidence="2" ref="1">
    <original>L</original>
    <variation>P</variation>
    <location>
        <position position="232"/>
    </location>
</feature>
<feature type="sequence conflict" description="In Ref. 1; AAB18301." evidence="2" ref="1">
    <original>T</original>
    <variation>A</variation>
    <location>
        <position position="239"/>
    </location>
</feature>
<feature type="sequence conflict" description="In Ref. 1; AAB18301." evidence="2" ref="1">
    <original>N</original>
    <variation>T</variation>
    <location>
        <position position="306"/>
    </location>
</feature>
<proteinExistence type="inferred from homology"/>
<organism>
    <name type="scientific">Clostridium acetobutylicum (strain ATCC 824 / DSM 792 / JCM 1419 / IAM 19013 / LMG 5710 / NBRC 13948 / NRRL B-527 / VKM B-1787 / 2291 / W)</name>
    <dbReference type="NCBI Taxonomy" id="272562"/>
    <lineage>
        <taxon>Bacteria</taxon>
        <taxon>Bacillati</taxon>
        <taxon>Bacillota</taxon>
        <taxon>Clostridia</taxon>
        <taxon>Eubacteriales</taxon>
        <taxon>Clostridiaceae</taxon>
        <taxon>Clostridium</taxon>
    </lineage>
</organism>
<gene>
    <name evidence="1" type="primary">ackA</name>
    <name type="synonym">ack</name>
    <name type="ordered locus">CA_C1743</name>
</gene>
<accession>P71104</accession>
<evidence type="ECO:0000255" key="1">
    <source>
        <dbReference type="HAMAP-Rule" id="MF_00020"/>
    </source>
</evidence>
<evidence type="ECO:0000305" key="2"/>
<protein>
    <recommendedName>
        <fullName evidence="1">Acetate kinase</fullName>
        <ecNumber evidence="1">2.7.2.1</ecNumber>
    </recommendedName>
    <alternativeName>
        <fullName evidence="1">Acetokinase</fullName>
    </alternativeName>
</protein>
<dbReference type="EC" id="2.7.2.1" evidence="1"/>
<dbReference type="EMBL" id="U38234">
    <property type="protein sequence ID" value="AAB18301.1"/>
    <property type="molecule type" value="Genomic_DNA"/>
</dbReference>
<dbReference type="EMBL" id="AE001437">
    <property type="protein sequence ID" value="AAK79709.1"/>
    <property type="molecule type" value="Genomic_DNA"/>
</dbReference>
<dbReference type="PIR" id="B97115">
    <property type="entry name" value="B97115"/>
</dbReference>
<dbReference type="RefSeq" id="NP_348369.1">
    <property type="nucleotide sequence ID" value="NC_003030.1"/>
</dbReference>
<dbReference type="RefSeq" id="WP_010965050.1">
    <property type="nucleotide sequence ID" value="NC_003030.1"/>
</dbReference>
<dbReference type="SMR" id="P71104"/>
<dbReference type="STRING" id="272562.CA_C1743"/>
<dbReference type="KEGG" id="cac:CA_C1743"/>
<dbReference type="PATRIC" id="fig|272562.8.peg.1945"/>
<dbReference type="eggNOG" id="COG0282">
    <property type="taxonomic scope" value="Bacteria"/>
</dbReference>
<dbReference type="HOGENOM" id="CLU_020352_0_1_9"/>
<dbReference type="OrthoDB" id="9802453at2"/>
<dbReference type="BioCyc" id="MetaCyc:ACKCLOS-MONOMER"/>
<dbReference type="UniPathway" id="UPA00340">
    <property type="reaction ID" value="UER00458"/>
</dbReference>
<dbReference type="Proteomes" id="UP000000814">
    <property type="component" value="Chromosome"/>
</dbReference>
<dbReference type="GO" id="GO:0005737">
    <property type="term" value="C:cytoplasm"/>
    <property type="evidence" value="ECO:0007669"/>
    <property type="project" value="UniProtKB-SubCell"/>
</dbReference>
<dbReference type="GO" id="GO:0008776">
    <property type="term" value="F:acetate kinase activity"/>
    <property type="evidence" value="ECO:0007669"/>
    <property type="project" value="UniProtKB-UniRule"/>
</dbReference>
<dbReference type="GO" id="GO:0005524">
    <property type="term" value="F:ATP binding"/>
    <property type="evidence" value="ECO:0007669"/>
    <property type="project" value="UniProtKB-KW"/>
</dbReference>
<dbReference type="GO" id="GO:0000287">
    <property type="term" value="F:magnesium ion binding"/>
    <property type="evidence" value="ECO:0007669"/>
    <property type="project" value="UniProtKB-UniRule"/>
</dbReference>
<dbReference type="GO" id="GO:0019413">
    <property type="term" value="P:acetate biosynthetic process"/>
    <property type="evidence" value="ECO:0000314"/>
    <property type="project" value="MENGO"/>
</dbReference>
<dbReference type="GO" id="GO:0006085">
    <property type="term" value="P:acetyl-CoA biosynthetic process"/>
    <property type="evidence" value="ECO:0007669"/>
    <property type="project" value="UniProtKB-UniRule"/>
</dbReference>
<dbReference type="CDD" id="cd24010">
    <property type="entry name" value="ASKHA_NBD_AcK_PK"/>
    <property type="match status" value="1"/>
</dbReference>
<dbReference type="Gene3D" id="3.30.420.40">
    <property type="match status" value="2"/>
</dbReference>
<dbReference type="HAMAP" id="MF_00020">
    <property type="entry name" value="Acetate_kinase"/>
    <property type="match status" value="1"/>
</dbReference>
<dbReference type="InterPro" id="IPR004372">
    <property type="entry name" value="Ac/propionate_kinase"/>
</dbReference>
<dbReference type="InterPro" id="IPR000890">
    <property type="entry name" value="Aliphatic_acid_kin_short-chain"/>
</dbReference>
<dbReference type="InterPro" id="IPR023865">
    <property type="entry name" value="Aliphatic_acid_kinase_CS"/>
</dbReference>
<dbReference type="InterPro" id="IPR043129">
    <property type="entry name" value="ATPase_NBD"/>
</dbReference>
<dbReference type="NCBIfam" id="TIGR00016">
    <property type="entry name" value="ackA"/>
    <property type="match status" value="1"/>
</dbReference>
<dbReference type="PANTHER" id="PTHR21060">
    <property type="entry name" value="ACETATE KINASE"/>
    <property type="match status" value="1"/>
</dbReference>
<dbReference type="PANTHER" id="PTHR21060:SF15">
    <property type="entry name" value="ACETATE KINASE-RELATED"/>
    <property type="match status" value="1"/>
</dbReference>
<dbReference type="Pfam" id="PF00871">
    <property type="entry name" value="Acetate_kinase"/>
    <property type="match status" value="1"/>
</dbReference>
<dbReference type="PIRSF" id="PIRSF000722">
    <property type="entry name" value="Acetate_prop_kin"/>
    <property type="match status" value="1"/>
</dbReference>
<dbReference type="PRINTS" id="PR00471">
    <property type="entry name" value="ACETATEKNASE"/>
</dbReference>
<dbReference type="SUPFAM" id="SSF53067">
    <property type="entry name" value="Actin-like ATPase domain"/>
    <property type="match status" value="2"/>
</dbReference>
<dbReference type="PROSITE" id="PS01075">
    <property type="entry name" value="ACETATE_KINASE_1"/>
    <property type="match status" value="1"/>
</dbReference>
<dbReference type="PROSITE" id="PS01076">
    <property type="entry name" value="ACETATE_KINASE_2"/>
    <property type="match status" value="1"/>
</dbReference>
<keyword id="KW-0067">ATP-binding</keyword>
<keyword id="KW-0963">Cytoplasm</keyword>
<keyword id="KW-0418">Kinase</keyword>
<keyword id="KW-0460">Magnesium</keyword>
<keyword id="KW-0479">Metal-binding</keyword>
<keyword id="KW-0547">Nucleotide-binding</keyword>
<keyword id="KW-1185">Reference proteome</keyword>
<keyword id="KW-0808">Transferase</keyword>
<sequence>MKNLVINCGSSSIKYQFIDMKDETVLAKGLVERIGIKGSVITHKVNGEKYVTETPMEDHKKAIKLVLDALLNDEYGVIKNIDEISAVGHRIVHGGEKYANSVLIDEDVMKSIEDCVSLAPLHNPPHIIGINACKELMPNVPMVAVFDTAFHQTIPDYAYMYAIPYEYYDKYKIRKYGFHGTSHKYVSRTAAEFIGKKVEDLKMVVCHMGNGASITAVENGKSVDTSMGFTPLGGLAMGTRSGDMDPAVVTFLMDKLNINASEVNNLLNKKSGIEGLSGISSDMRDIKKGNYVDKDPKAMLAYSVFNYKIKQFIGSYTAVMNGLDCLVFTGGIGENSFENRREICKNMDYLGIKIDDKKNDETMGIPMDISAEGSKVRVLVIPTNEELMIARDTKDIVGKLK</sequence>
<reference key="1">
    <citation type="journal article" date="1996" name="Appl. Environ. Microbiol.">
        <title>Cloning, sequencing, and expression of genes encoding phosphotransacetylase and acetate kinase from Clostridium acetobutylicum ATCC 824.</title>
        <authorList>
            <person name="Boynton Z.L."/>
            <person name="Bennett G.N."/>
            <person name="Rudolph F.B."/>
        </authorList>
    </citation>
    <scope>NUCLEOTIDE SEQUENCE [GENOMIC DNA]</scope>
    <source>
        <strain>ATCC 824 / DSM 792 / JCM 1419 / IAM 19013 / LMG 5710 / NBRC 13948 / NRRL B-527 / VKM B-1787 / 2291 / W</strain>
    </source>
</reference>
<reference key="2">
    <citation type="journal article" date="2001" name="J. Bacteriol.">
        <title>Genome sequence and comparative analysis of the solvent-producing bacterium Clostridium acetobutylicum.</title>
        <authorList>
            <person name="Noelling J."/>
            <person name="Breton G."/>
            <person name="Omelchenko M.V."/>
            <person name="Makarova K.S."/>
            <person name="Zeng Q."/>
            <person name="Gibson R."/>
            <person name="Lee H.M."/>
            <person name="Dubois J."/>
            <person name="Qiu D."/>
            <person name="Hitti J."/>
            <person name="Wolf Y.I."/>
            <person name="Tatusov R.L."/>
            <person name="Sabathe F."/>
            <person name="Doucette-Stamm L.A."/>
            <person name="Soucaille P."/>
            <person name="Daly M.J."/>
            <person name="Bennett G.N."/>
            <person name="Koonin E.V."/>
            <person name="Smith D.R."/>
        </authorList>
    </citation>
    <scope>NUCLEOTIDE SEQUENCE [LARGE SCALE GENOMIC DNA]</scope>
    <source>
        <strain>ATCC 824 / DSM 792 / JCM 1419 / IAM 19013 / LMG 5710 / NBRC 13948 / NRRL B-527 / VKM B-1787 / 2291 / W</strain>
    </source>
</reference>
<comment type="function">
    <text evidence="1">Catalyzes the formation of acetyl phosphate from acetate and ATP. Can also catalyze the reverse reaction.</text>
</comment>
<comment type="catalytic activity">
    <reaction evidence="1">
        <text>acetate + ATP = acetyl phosphate + ADP</text>
        <dbReference type="Rhea" id="RHEA:11352"/>
        <dbReference type="ChEBI" id="CHEBI:22191"/>
        <dbReference type="ChEBI" id="CHEBI:30089"/>
        <dbReference type="ChEBI" id="CHEBI:30616"/>
        <dbReference type="ChEBI" id="CHEBI:456216"/>
        <dbReference type="EC" id="2.7.2.1"/>
    </reaction>
</comment>
<comment type="cofactor">
    <cofactor evidence="1">
        <name>Mg(2+)</name>
        <dbReference type="ChEBI" id="CHEBI:18420"/>
    </cofactor>
    <cofactor evidence="1">
        <name>Mn(2+)</name>
        <dbReference type="ChEBI" id="CHEBI:29035"/>
    </cofactor>
    <text evidence="1">Mg(2+). Can also accept Mn(2+).</text>
</comment>
<comment type="pathway">
    <text evidence="1">Metabolic intermediate biosynthesis; acetyl-CoA biosynthesis; acetyl-CoA from acetate: step 1/2.</text>
</comment>
<comment type="subunit">
    <text evidence="1">Homodimer.</text>
</comment>
<comment type="subcellular location">
    <subcellularLocation>
        <location evidence="1">Cytoplasm</location>
    </subcellularLocation>
</comment>
<comment type="similarity">
    <text evidence="1">Belongs to the acetokinase family.</text>
</comment>